<comment type="function">
    <text evidence="1">Catalyzes the transfer of a dimethylallyl group onto the adenine at position 37 in tRNAs that read codons beginning with uridine, leading to the formation of N6-(dimethylallyl)adenosine (i(6)A).</text>
</comment>
<comment type="catalytic activity">
    <reaction evidence="1">
        <text>adenosine(37) in tRNA + dimethylallyl diphosphate = N(6)-dimethylallyladenosine(37) in tRNA + diphosphate</text>
        <dbReference type="Rhea" id="RHEA:26482"/>
        <dbReference type="Rhea" id="RHEA-COMP:10162"/>
        <dbReference type="Rhea" id="RHEA-COMP:10375"/>
        <dbReference type="ChEBI" id="CHEBI:33019"/>
        <dbReference type="ChEBI" id="CHEBI:57623"/>
        <dbReference type="ChEBI" id="CHEBI:74411"/>
        <dbReference type="ChEBI" id="CHEBI:74415"/>
        <dbReference type="EC" id="2.5.1.75"/>
    </reaction>
</comment>
<comment type="cofactor">
    <cofactor evidence="1">
        <name>Mg(2+)</name>
        <dbReference type="ChEBI" id="CHEBI:18420"/>
    </cofactor>
</comment>
<comment type="subunit">
    <text evidence="1">Monomer.</text>
</comment>
<comment type="similarity">
    <text evidence="1">Belongs to the IPP transferase family.</text>
</comment>
<gene>
    <name evidence="1" type="primary">miaA</name>
    <name type="ordered locus">A1G_03725</name>
</gene>
<organism>
    <name type="scientific">Rickettsia rickettsii (strain Sheila Smith)</name>
    <dbReference type="NCBI Taxonomy" id="392021"/>
    <lineage>
        <taxon>Bacteria</taxon>
        <taxon>Pseudomonadati</taxon>
        <taxon>Pseudomonadota</taxon>
        <taxon>Alphaproteobacteria</taxon>
        <taxon>Rickettsiales</taxon>
        <taxon>Rickettsiaceae</taxon>
        <taxon>Rickettsieae</taxon>
        <taxon>Rickettsia</taxon>
        <taxon>spotted fever group</taxon>
    </lineage>
</organism>
<keyword id="KW-0067">ATP-binding</keyword>
<keyword id="KW-0460">Magnesium</keyword>
<keyword id="KW-0547">Nucleotide-binding</keyword>
<keyword id="KW-0808">Transferase</keyword>
<keyword id="KW-0819">tRNA processing</keyword>
<evidence type="ECO:0000255" key="1">
    <source>
        <dbReference type="HAMAP-Rule" id="MF_00185"/>
    </source>
</evidence>
<sequence length="363" mass="41505">MLACNDDTSLYLLVKQVTKKEIYSNDLENGNVKRGASTHSLYLIGDPKFCRNNSSKQKSIIILCGPTASGKSYLGHELAKAYNGEIINIDSMQVYKEIPIITASPPKSYKTEILYHLYNFLSMTEDFSVIKYLKLATEKIKEITDRGKLPILIGGTGLYINSLVFGYNNIPDISEDLQAQVRNLHVKIGNIELWGKLEKFDPLAASKINQNDTQRLIRAYEVFMQTGKSIFSFQTLPKEQILSDFNCKIIFLNPERKFLYKTCDERLDKIFKEGAIDEIALIKKQFAPKDYTNLKAVGIKEILAYLNGNLTLDEALNAAQIRTRQYAKRQVTWFKNQIQDKITLEYANQEEFTQTLKNSFKTI</sequence>
<accession>A8GS87</accession>
<name>MIAA_RICRS</name>
<dbReference type="EC" id="2.5.1.75" evidence="1"/>
<dbReference type="EMBL" id="CP000848">
    <property type="protein sequence ID" value="ABV76262.1"/>
    <property type="molecule type" value="Genomic_DNA"/>
</dbReference>
<dbReference type="RefSeq" id="WP_012150844.1">
    <property type="nucleotide sequence ID" value="NZ_CP121767.1"/>
</dbReference>
<dbReference type="SMR" id="A8GS87"/>
<dbReference type="GeneID" id="79937393"/>
<dbReference type="KEGG" id="rri:A1G_03725"/>
<dbReference type="HOGENOM" id="CLU_032616_0_1_5"/>
<dbReference type="Proteomes" id="UP000006832">
    <property type="component" value="Chromosome"/>
</dbReference>
<dbReference type="GO" id="GO:0005524">
    <property type="term" value="F:ATP binding"/>
    <property type="evidence" value="ECO:0007669"/>
    <property type="project" value="UniProtKB-UniRule"/>
</dbReference>
<dbReference type="GO" id="GO:0052381">
    <property type="term" value="F:tRNA dimethylallyltransferase activity"/>
    <property type="evidence" value="ECO:0007669"/>
    <property type="project" value="UniProtKB-UniRule"/>
</dbReference>
<dbReference type="GO" id="GO:0006400">
    <property type="term" value="P:tRNA modification"/>
    <property type="evidence" value="ECO:0007669"/>
    <property type="project" value="TreeGrafter"/>
</dbReference>
<dbReference type="Gene3D" id="1.10.20.140">
    <property type="match status" value="1"/>
</dbReference>
<dbReference type="Gene3D" id="3.40.50.300">
    <property type="entry name" value="P-loop containing nucleotide triphosphate hydrolases"/>
    <property type="match status" value="1"/>
</dbReference>
<dbReference type="HAMAP" id="MF_00185">
    <property type="entry name" value="IPP_trans"/>
    <property type="match status" value="1"/>
</dbReference>
<dbReference type="InterPro" id="IPR039657">
    <property type="entry name" value="Dimethylallyltransferase"/>
</dbReference>
<dbReference type="InterPro" id="IPR018022">
    <property type="entry name" value="IPT"/>
</dbReference>
<dbReference type="InterPro" id="IPR027417">
    <property type="entry name" value="P-loop_NTPase"/>
</dbReference>
<dbReference type="NCBIfam" id="TIGR00174">
    <property type="entry name" value="miaA"/>
    <property type="match status" value="1"/>
</dbReference>
<dbReference type="PANTHER" id="PTHR11088">
    <property type="entry name" value="TRNA DIMETHYLALLYLTRANSFERASE"/>
    <property type="match status" value="1"/>
</dbReference>
<dbReference type="PANTHER" id="PTHR11088:SF60">
    <property type="entry name" value="TRNA DIMETHYLALLYLTRANSFERASE"/>
    <property type="match status" value="1"/>
</dbReference>
<dbReference type="Pfam" id="PF01715">
    <property type="entry name" value="IPPT"/>
    <property type="match status" value="1"/>
</dbReference>
<dbReference type="SUPFAM" id="SSF52540">
    <property type="entry name" value="P-loop containing nucleoside triphosphate hydrolases"/>
    <property type="match status" value="2"/>
</dbReference>
<proteinExistence type="inferred from homology"/>
<reference key="1">
    <citation type="submission" date="2007-09" db="EMBL/GenBank/DDBJ databases">
        <title>Complete genome sequence of Rickettsia rickettsii.</title>
        <authorList>
            <person name="Madan A."/>
            <person name="Fahey J."/>
            <person name="Helton E."/>
            <person name="Ketteman M."/>
            <person name="Madan A."/>
            <person name="Rodrigues S."/>
            <person name="Sanchez A."/>
            <person name="Dasch G."/>
            <person name="Eremeeva M."/>
        </authorList>
    </citation>
    <scope>NUCLEOTIDE SEQUENCE [LARGE SCALE GENOMIC DNA]</scope>
    <source>
        <strain>Sheila Smith</strain>
    </source>
</reference>
<protein>
    <recommendedName>
        <fullName evidence="1">tRNA dimethylallyltransferase</fullName>
        <ecNumber evidence="1">2.5.1.75</ecNumber>
    </recommendedName>
    <alternativeName>
        <fullName evidence="1">Dimethylallyl diphosphate:tRNA dimethylallyltransferase</fullName>
        <shortName evidence="1">DMAPP:tRNA dimethylallyltransferase</shortName>
        <shortName evidence="1">DMATase</shortName>
    </alternativeName>
    <alternativeName>
        <fullName evidence="1">Isopentenyl-diphosphate:tRNA isopentenyltransferase</fullName>
        <shortName evidence="1">IPP transferase</shortName>
        <shortName evidence="1">IPPT</shortName>
        <shortName evidence="1">IPTase</shortName>
    </alternativeName>
</protein>
<feature type="chain" id="PRO_0000377297" description="tRNA dimethylallyltransferase">
    <location>
        <begin position="1"/>
        <end position="363"/>
    </location>
</feature>
<feature type="region of interest" description="Interaction with substrate tRNA" evidence="1">
    <location>
        <begin position="90"/>
        <end position="93"/>
    </location>
</feature>
<feature type="region of interest" description="Interaction with substrate tRNA" evidence="1">
    <location>
        <begin position="214"/>
        <end position="218"/>
    </location>
</feature>
<feature type="binding site" evidence="1">
    <location>
        <begin position="65"/>
        <end position="72"/>
    </location>
    <ligand>
        <name>ATP</name>
        <dbReference type="ChEBI" id="CHEBI:30616"/>
    </ligand>
</feature>
<feature type="binding site" evidence="1">
    <location>
        <begin position="67"/>
        <end position="72"/>
    </location>
    <ligand>
        <name>substrate</name>
    </ligand>
</feature>
<feature type="site" description="Interaction with substrate tRNA" evidence="1">
    <location>
        <position position="156"/>
    </location>
</feature>